<protein>
    <recommendedName>
        <fullName evidence="1">Chaperone protein DnaJ</fullName>
    </recommendedName>
</protein>
<feature type="chain" id="PRO_1000137692" description="Chaperone protein DnaJ">
    <location>
        <begin position="1"/>
        <end position="368"/>
    </location>
</feature>
<feature type="domain" description="J" evidence="1">
    <location>
        <begin position="5"/>
        <end position="69"/>
    </location>
</feature>
<feature type="repeat" description="CXXCXGXG motif">
    <location>
        <begin position="138"/>
        <end position="145"/>
    </location>
</feature>
<feature type="repeat" description="CXXCXGXG motif">
    <location>
        <begin position="155"/>
        <end position="162"/>
    </location>
</feature>
<feature type="repeat" description="CXXCXGXG motif">
    <location>
        <begin position="181"/>
        <end position="188"/>
    </location>
</feature>
<feature type="repeat" description="CXXCXGXG motif">
    <location>
        <begin position="195"/>
        <end position="202"/>
    </location>
</feature>
<feature type="zinc finger region" description="CR-type" evidence="1">
    <location>
        <begin position="125"/>
        <end position="207"/>
    </location>
</feature>
<feature type="binding site" evidence="1">
    <location>
        <position position="138"/>
    </location>
    <ligand>
        <name>Zn(2+)</name>
        <dbReference type="ChEBI" id="CHEBI:29105"/>
        <label>1</label>
    </ligand>
</feature>
<feature type="binding site" evidence="1">
    <location>
        <position position="141"/>
    </location>
    <ligand>
        <name>Zn(2+)</name>
        <dbReference type="ChEBI" id="CHEBI:29105"/>
        <label>1</label>
    </ligand>
</feature>
<feature type="binding site" evidence="1">
    <location>
        <position position="155"/>
    </location>
    <ligand>
        <name>Zn(2+)</name>
        <dbReference type="ChEBI" id="CHEBI:29105"/>
        <label>2</label>
    </ligand>
</feature>
<feature type="binding site" evidence="1">
    <location>
        <position position="158"/>
    </location>
    <ligand>
        <name>Zn(2+)</name>
        <dbReference type="ChEBI" id="CHEBI:29105"/>
        <label>2</label>
    </ligand>
</feature>
<feature type="binding site" evidence="1">
    <location>
        <position position="181"/>
    </location>
    <ligand>
        <name>Zn(2+)</name>
        <dbReference type="ChEBI" id="CHEBI:29105"/>
        <label>2</label>
    </ligand>
</feature>
<feature type="binding site" evidence="1">
    <location>
        <position position="184"/>
    </location>
    <ligand>
        <name>Zn(2+)</name>
        <dbReference type="ChEBI" id="CHEBI:29105"/>
        <label>2</label>
    </ligand>
</feature>
<feature type="binding site" evidence="1">
    <location>
        <position position="195"/>
    </location>
    <ligand>
        <name>Zn(2+)</name>
        <dbReference type="ChEBI" id="CHEBI:29105"/>
        <label>1</label>
    </ligand>
</feature>
<feature type="binding site" evidence="1">
    <location>
        <position position="198"/>
    </location>
    <ligand>
        <name>Zn(2+)</name>
        <dbReference type="ChEBI" id="CHEBI:29105"/>
        <label>1</label>
    </ligand>
</feature>
<dbReference type="EMBL" id="CP001022">
    <property type="protein sequence ID" value="ACB60263.1"/>
    <property type="molecule type" value="Genomic_DNA"/>
</dbReference>
<dbReference type="RefSeq" id="WP_012369687.1">
    <property type="nucleotide sequence ID" value="NC_010556.1"/>
</dbReference>
<dbReference type="SMR" id="B1YKT0"/>
<dbReference type="STRING" id="262543.Exig_0782"/>
<dbReference type="KEGG" id="esi:Exig_0782"/>
<dbReference type="eggNOG" id="COG0484">
    <property type="taxonomic scope" value="Bacteria"/>
</dbReference>
<dbReference type="HOGENOM" id="CLU_017633_0_7_9"/>
<dbReference type="OrthoDB" id="9779889at2"/>
<dbReference type="Proteomes" id="UP000001681">
    <property type="component" value="Chromosome"/>
</dbReference>
<dbReference type="GO" id="GO:0005737">
    <property type="term" value="C:cytoplasm"/>
    <property type="evidence" value="ECO:0007669"/>
    <property type="project" value="UniProtKB-SubCell"/>
</dbReference>
<dbReference type="GO" id="GO:0005524">
    <property type="term" value="F:ATP binding"/>
    <property type="evidence" value="ECO:0007669"/>
    <property type="project" value="InterPro"/>
</dbReference>
<dbReference type="GO" id="GO:0031072">
    <property type="term" value="F:heat shock protein binding"/>
    <property type="evidence" value="ECO:0007669"/>
    <property type="project" value="InterPro"/>
</dbReference>
<dbReference type="GO" id="GO:0051082">
    <property type="term" value="F:unfolded protein binding"/>
    <property type="evidence" value="ECO:0007669"/>
    <property type="project" value="UniProtKB-UniRule"/>
</dbReference>
<dbReference type="GO" id="GO:0008270">
    <property type="term" value="F:zinc ion binding"/>
    <property type="evidence" value="ECO:0007669"/>
    <property type="project" value="UniProtKB-UniRule"/>
</dbReference>
<dbReference type="GO" id="GO:0051085">
    <property type="term" value="P:chaperone cofactor-dependent protein refolding"/>
    <property type="evidence" value="ECO:0007669"/>
    <property type="project" value="TreeGrafter"/>
</dbReference>
<dbReference type="GO" id="GO:0006260">
    <property type="term" value="P:DNA replication"/>
    <property type="evidence" value="ECO:0007669"/>
    <property type="project" value="UniProtKB-KW"/>
</dbReference>
<dbReference type="GO" id="GO:0042026">
    <property type="term" value="P:protein refolding"/>
    <property type="evidence" value="ECO:0007669"/>
    <property type="project" value="TreeGrafter"/>
</dbReference>
<dbReference type="GO" id="GO:0009408">
    <property type="term" value="P:response to heat"/>
    <property type="evidence" value="ECO:0007669"/>
    <property type="project" value="InterPro"/>
</dbReference>
<dbReference type="CDD" id="cd06257">
    <property type="entry name" value="DnaJ"/>
    <property type="match status" value="1"/>
</dbReference>
<dbReference type="CDD" id="cd10747">
    <property type="entry name" value="DnaJ_C"/>
    <property type="match status" value="1"/>
</dbReference>
<dbReference type="CDD" id="cd10719">
    <property type="entry name" value="DnaJ_zf"/>
    <property type="match status" value="1"/>
</dbReference>
<dbReference type="FunFam" id="1.10.287.110:FF:000031">
    <property type="entry name" value="Molecular chaperone DnaJ"/>
    <property type="match status" value="1"/>
</dbReference>
<dbReference type="FunFam" id="2.10.230.10:FF:000002">
    <property type="entry name" value="Molecular chaperone DnaJ"/>
    <property type="match status" value="1"/>
</dbReference>
<dbReference type="FunFam" id="2.60.260.20:FF:000004">
    <property type="entry name" value="Molecular chaperone DnaJ"/>
    <property type="match status" value="1"/>
</dbReference>
<dbReference type="Gene3D" id="6.20.20.10">
    <property type="match status" value="2"/>
</dbReference>
<dbReference type="Gene3D" id="1.10.287.110">
    <property type="entry name" value="DnaJ domain"/>
    <property type="match status" value="1"/>
</dbReference>
<dbReference type="Gene3D" id="2.60.260.20">
    <property type="entry name" value="Urease metallochaperone UreE, N-terminal domain"/>
    <property type="match status" value="2"/>
</dbReference>
<dbReference type="HAMAP" id="MF_01152">
    <property type="entry name" value="DnaJ"/>
    <property type="match status" value="1"/>
</dbReference>
<dbReference type="InterPro" id="IPR012724">
    <property type="entry name" value="DnaJ"/>
</dbReference>
<dbReference type="InterPro" id="IPR002939">
    <property type="entry name" value="DnaJ_C"/>
</dbReference>
<dbReference type="InterPro" id="IPR001623">
    <property type="entry name" value="DnaJ_domain"/>
</dbReference>
<dbReference type="InterPro" id="IPR018253">
    <property type="entry name" value="DnaJ_domain_CS"/>
</dbReference>
<dbReference type="InterPro" id="IPR008971">
    <property type="entry name" value="HSP40/DnaJ_pept-bd"/>
</dbReference>
<dbReference type="InterPro" id="IPR001305">
    <property type="entry name" value="HSP_DnaJ_Cys-rich_dom"/>
</dbReference>
<dbReference type="InterPro" id="IPR036410">
    <property type="entry name" value="HSP_DnaJ_Cys-rich_dom_sf"/>
</dbReference>
<dbReference type="InterPro" id="IPR036869">
    <property type="entry name" value="J_dom_sf"/>
</dbReference>
<dbReference type="NCBIfam" id="TIGR02349">
    <property type="entry name" value="DnaJ_bact"/>
    <property type="match status" value="1"/>
</dbReference>
<dbReference type="NCBIfam" id="NF008035">
    <property type="entry name" value="PRK10767.1"/>
    <property type="match status" value="1"/>
</dbReference>
<dbReference type="NCBIfam" id="NF010873">
    <property type="entry name" value="PRK14280.1"/>
    <property type="match status" value="1"/>
</dbReference>
<dbReference type="PANTHER" id="PTHR43096:SF48">
    <property type="entry name" value="CHAPERONE PROTEIN DNAJ"/>
    <property type="match status" value="1"/>
</dbReference>
<dbReference type="PANTHER" id="PTHR43096">
    <property type="entry name" value="DNAJ HOMOLOG 1, MITOCHONDRIAL-RELATED"/>
    <property type="match status" value="1"/>
</dbReference>
<dbReference type="Pfam" id="PF00226">
    <property type="entry name" value="DnaJ"/>
    <property type="match status" value="1"/>
</dbReference>
<dbReference type="Pfam" id="PF01556">
    <property type="entry name" value="DnaJ_C"/>
    <property type="match status" value="1"/>
</dbReference>
<dbReference type="Pfam" id="PF00684">
    <property type="entry name" value="DnaJ_CXXCXGXG"/>
    <property type="match status" value="1"/>
</dbReference>
<dbReference type="PRINTS" id="PR00625">
    <property type="entry name" value="JDOMAIN"/>
</dbReference>
<dbReference type="SMART" id="SM00271">
    <property type="entry name" value="DnaJ"/>
    <property type="match status" value="1"/>
</dbReference>
<dbReference type="SUPFAM" id="SSF46565">
    <property type="entry name" value="Chaperone J-domain"/>
    <property type="match status" value="1"/>
</dbReference>
<dbReference type="SUPFAM" id="SSF57938">
    <property type="entry name" value="DnaJ/Hsp40 cysteine-rich domain"/>
    <property type="match status" value="1"/>
</dbReference>
<dbReference type="SUPFAM" id="SSF49493">
    <property type="entry name" value="HSP40/DnaJ peptide-binding domain"/>
    <property type="match status" value="2"/>
</dbReference>
<dbReference type="PROSITE" id="PS00636">
    <property type="entry name" value="DNAJ_1"/>
    <property type="match status" value="1"/>
</dbReference>
<dbReference type="PROSITE" id="PS50076">
    <property type="entry name" value="DNAJ_2"/>
    <property type="match status" value="1"/>
</dbReference>
<dbReference type="PROSITE" id="PS51188">
    <property type="entry name" value="ZF_CR"/>
    <property type="match status" value="1"/>
</dbReference>
<name>DNAJ_EXIS2</name>
<reference key="1">
    <citation type="submission" date="2008-04" db="EMBL/GenBank/DDBJ databases">
        <title>Complete sequence of chromosome of Exiguobacterium sibiricum 255-15.</title>
        <authorList>
            <consortium name="US DOE Joint Genome Institute"/>
            <person name="Copeland A."/>
            <person name="Lucas S."/>
            <person name="Lapidus A."/>
            <person name="Glavina del Rio T."/>
            <person name="Dalin E."/>
            <person name="Tice H."/>
            <person name="Bruce D."/>
            <person name="Goodwin L."/>
            <person name="Pitluck S."/>
            <person name="Kiss H."/>
            <person name="Chertkov O."/>
            <person name="Monk C."/>
            <person name="Brettin T."/>
            <person name="Detter J.C."/>
            <person name="Han C."/>
            <person name="Kuske C.R."/>
            <person name="Schmutz J."/>
            <person name="Larimer F."/>
            <person name="Land M."/>
            <person name="Hauser L."/>
            <person name="Kyrpides N."/>
            <person name="Mikhailova N."/>
            <person name="Vishnivetskaya T."/>
            <person name="Rodrigues D.F."/>
            <person name="Gilichinsky D."/>
            <person name="Tiedje J."/>
            <person name="Richardson P."/>
        </authorList>
    </citation>
    <scope>NUCLEOTIDE SEQUENCE [LARGE SCALE GENOMIC DNA]</scope>
    <source>
        <strain>DSM 17290 / CCUG 55495 / CIP 109462 / JCM 13490 / 255-15</strain>
    </source>
</reference>
<keyword id="KW-0143">Chaperone</keyword>
<keyword id="KW-0963">Cytoplasm</keyword>
<keyword id="KW-0235">DNA replication</keyword>
<keyword id="KW-0479">Metal-binding</keyword>
<keyword id="KW-1185">Reference proteome</keyword>
<keyword id="KW-0677">Repeat</keyword>
<keyword id="KW-0346">Stress response</keyword>
<keyword id="KW-0862">Zinc</keyword>
<keyword id="KW-0863">Zinc-finger</keyword>
<proteinExistence type="inferred from homology"/>
<sequence length="368" mass="40709">MEKRDYYEVLGVARDASAAEIKRAYRKLARTYHPDVNKEADADQKFKELSEAYEVLSDDNQRARYDQFGHQDPSQGGGGFGGAEGFGDIFDMFFGGGRRQDPNAPRKGQDLQYVEEIDFMEAFSGVEKVITIPVEEDCGTCHGSGAKPGTHPETCKRCGGSGHINVEQNTMFGRVVNQTTCSTCHGRGQIVKEPCETCRGAGRVRKNKDVRVKIPAGIDNGQQIRLAGKGEAGVNGGPFGDLYVVVRVREHELFERVDDHIVMDMPLTFAQATLGDEIEVPTVHGKVSLKIPAGTQTGSRFRLRGKGMPNVRSGHHGDQYVNVVIITPKNLTDRQKELLREFNEISDEKGVEEQHEGVFSRIKTFFTG</sequence>
<gene>
    <name evidence="1" type="primary">dnaJ</name>
    <name type="ordered locus">Exig_0782</name>
</gene>
<accession>B1YKT0</accession>
<comment type="function">
    <text evidence="1">Participates actively in the response to hyperosmotic and heat shock by preventing the aggregation of stress-denatured proteins and by disaggregating proteins, also in an autonomous, DnaK-independent fashion. Unfolded proteins bind initially to DnaJ; upon interaction with the DnaJ-bound protein, DnaK hydrolyzes its bound ATP, resulting in the formation of a stable complex. GrpE releases ADP from DnaK; ATP binding to DnaK triggers the release of the substrate protein, thus completing the reaction cycle. Several rounds of ATP-dependent interactions between DnaJ, DnaK and GrpE are required for fully efficient folding. Also involved, together with DnaK and GrpE, in the DNA replication of plasmids through activation of initiation proteins.</text>
</comment>
<comment type="cofactor">
    <cofactor evidence="1">
        <name>Zn(2+)</name>
        <dbReference type="ChEBI" id="CHEBI:29105"/>
    </cofactor>
    <text evidence="1">Binds 2 Zn(2+) ions per monomer.</text>
</comment>
<comment type="subunit">
    <text evidence="1">Homodimer.</text>
</comment>
<comment type="subcellular location">
    <subcellularLocation>
        <location evidence="1">Cytoplasm</location>
    </subcellularLocation>
</comment>
<comment type="domain">
    <text evidence="1">The J domain is necessary and sufficient to stimulate DnaK ATPase activity. Zinc center 1 plays an important role in the autonomous, DnaK-independent chaperone activity of DnaJ. Zinc center 2 is essential for interaction with DnaK and for DnaJ activity.</text>
</comment>
<comment type="similarity">
    <text evidence="1">Belongs to the DnaJ family.</text>
</comment>
<evidence type="ECO:0000255" key="1">
    <source>
        <dbReference type="HAMAP-Rule" id="MF_01152"/>
    </source>
</evidence>
<organism>
    <name type="scientific">Exiguobacterium sibiricum (strain DSM 17290 / CCUG 55495 / CIP 109462 / JCM 13490 / 255-15)</name>
    <dbReference type="NCBI Taxonomy" id="262543"/>
    <lineage>
        <taxon>Bacteria</taxon>
        <taxon>Bacillati</taxon>
        <taxon>Bacillota</taxon>
        <taxon>Bacilli</taxon>
        <taxon>Bacillales</taxon>
        <taxon>Bacillales Family XII. Incertae Sedis</taxon>
        <taxon>Exiguobacterium</taxon>
    </lineage>
</organism>